<evidence type="ECO:0000255" key="1">
    <source>
        <dbReference type="HAMAP-Rule" id="MF_00730"/>
    </source>
</evidence>
<name>NDPA_SHISS</name>
<dbReference type="EMBL" id="CP000038">
    <property type="protein sequence ID" value="AAZ88891.1"/>
    <property type="molecule type" value="Genomic_DNA"/>
</dbReference>
<dbReference type="RefSeq" id="WP_000050796.1">
    <property type="nucleotide sequence ID" value="NC_007384.1"/>
</dbReference>
<dbReference type="SMR" id="Q3Z021"/>
<dbReference type="GeneID" id="93774995"/>
<dbReference type="KEGG" id="ssn:SSON_2242"/>
<dbReference type="HOGENOM" id="CLU_063050_0_1_6"/>
<dbReference type="Proteomes" id="UP000002529">
    <property type="component" value="Chromosome"/>
</dbReference>
<dbReference type="GO" id="GO:0043590">
    <property type="term" value="C:bacterial nucleoid"/>
    <property type="evidence" value="ECO:0007669"/>
    <property type="project" value="TreeGrafter"/>
</dbReference>
<dbReference type="GO" id="GO:0005737">
    <property type="term" value="C:cytoplasm"/>
    <property type="evidence" value="ECO:0007669"/>
    <property type="project" value="UniProtKB-UniRule"/>
</dbReference>
<dbReference type="GO" id="GO:0003690">
    <property type="term" value="F:double-stranded DNA binding"/>
    <property type="evidence" value="ECO:0007669"/>
    <property type="project" value="TreeGrafter"/>
</dbReference>
<dbReference type="GO" id="GO:0003727">
    <property type="term" value="F:single-stranded RNA binding"/>
    <property type="evidence" value="ECO:0007669"/>
    <property type="project" value="TreeGrafter"/>
</dbReference>
<dbReference type="HAMAP" id="MF_00730">
    <property type="entry name" value="NdpA"/>
    <property type="match status" value="1"/>
</dbReference>
<dbReference type="InterPro" id="IPR007358">
    <property type="entry name" value="Nucleoid_associated_NdpA"/>
</dbReference>
<dbReference type="NCBIfam" id="NF001557">
    <property type="entry name" value="PRK00378.1"/>
    <property type="match status" value="1"/>
</dbReference>
<dbReference type="PANTHER" id="PTHR38772">
    <property type="match status" value="1"/>
</dbReference>
<dbReference type="PANTHER" id="PTHR38772:SF1">
    <property type="entry name" value="NUCLEOID-ASSOCIATED PROTEIN YEJK"/>
    <property type="match status" value="1"/>
</dbReference>
<dbReference type="Pfam" id="PF04245">
    <property type="entry name" value="NA37"/>
    <property type="match status" value="1"/>
</dbReference>
<keyword id="KW-0963">Cytoplasm</keyword>
<keyword id="KW-1185">Reference proteome</keyword>
<sequence>MSLDINQIALHQLIKRDEQNLELVLRDSLLEPTETVVEMVAELHRVYSAKNKAYGLFSEESELAQTLRLQRQGEEDFLAFSRAATGRLRDELAKYPFADGGFVLFCHYRYLAVEYLLVAVLSNLSSMRVNENLDINPTHYLDINHADIVARIDLTEWETNPESTRYLTFLKGRVGRKVADFFMDFLGASEGLNTKAQNRGLLQAVDDFTAEAQLDKAERQNVRQQVYSYCNEQLQAGEEIELESLSKELAGVSEVSFTEFAAEKGYELEESFPADRSTLRQLTKFAGSGGGLTINFDAMLLGERIFWEPATDTLTIKGTPPNLRDQLQRRTSGGN</sequence>
<proteinExistence type="inferred from homology"/>
<feature type="chain" id="PRO_1000045954" description="Nucleoid-associated protein YejK">
    <location>
        <begin position="1"/>
        <end position="335"/>
    </location>
</feature>
<gene>
    <name evidence="1" type="primary">yejK</name>
    <name type="ordered locus">SSON_2242</name>
</gene>
<comment type="subcellular location">
    <subcellularLocation>
        <location evidence="1">Cytoplasm</location>
        <location evidence="1">Nucleoid</location>
    </subcellularLocation>
</comment>
<comment type="similarity">
    <text evidence="1">Belongs to the YejK family.</text>
</comment>
<organism>
    <name type="scientific">Shigella sonnei (strain Ss046)</name>
    <dbReference type="NCBI Taxonomy" id="300269"/>
    <lineage>
        <taxon>Bacteria</taxon>
        <taxon>Pseudomonadati</taxon>
        <taxon>Pseudomonadota</taxon>
        <taxon>Gammaproteobacteria</taxon>
        <taxon>Enterobacterales</taxon>
        <taxon>Enterobacteriaceae</taxon>
        <taxon>Shigella</taxon>
    </lineage>
</organism>
<protein>
    <recommendedName>
        <fullName evidence="1">Nucleoid-associated protein YejK</fullName>
    </recommendedName>
</protein>
<accession>Q3Z021</accession>
<reference key="1">
    <citation type="journal article" date="2005" name="Nucleic Acids Res.">
        <title>Genome dynamics and diversity of Shigella species, the etiologic agents of bacillary dysentery.</title>
        <authorList>
            <person name="Yang F."/>
            <person name="Yang J."/>
            <person name="Zhang X."/>
            <person name="Chen L."/>
            <person name="Jiang Y."/>
            <person name="Yan Y."/>
            <person name="Tang X."/>
            <person name="Wang J."/>
            <person name="Xiong Z."/>
            <person name="Dong J."/>
            <person name="Xue Y."/>
            <person name="Zhu Y."/>
            <person name="Xu X."/>
            <person name="Sun L."/>
            <person name="Chen S."/>
            <person name="Nie H."/>
            <person name="Peng J."/>
            <person name="Xu J."/>
            <person name="Wang Y."/>
            <person name="Yuan Z."/>
            <person name="Wen Y."/>
            <person name="Yao Z."/>
            <person name="Shen Y."/>
            <person name="Qiang B."/>
            <person name="Hou Y."/>
            <person name="Yu J."/>
            <person name="Jin Q."/>
        </authorList>
    </citation>
    <scope>NUCLEOTIDE SEQUENCE [LARGE SCALE GENOMIC DNA]</scope>
    <source>
        <strain>Ss046</strain>
    </source>
</reference>